<name>TIG_LISMF</name>
<organism>
    <name type="scientific">Listeria monocytogenes serotype 4b (strain F2365)</name>
    <dbReference type="NCBI Taxonomy" id="265669"/>
    <lineage>
        <taxon>Bacteria</taxon>
        <taxon>Bacillati</taxon>
        <taxon>Bacillota</taxon>
        <taxon>Bacilli</taxon>
        <taxon>Bacillales</taxon>
        <taxon>Listeriaceae</taxon>
        <taxon>Listeria</taxon>
    </lineage>
</organism>
<dbReference type="EC" id="5.2.1.8" evidence="1"/>
<dbReference type="EMBL" id="AE017262">
    <property type="protein sequence ID" value="AAT04059.1"/>
    <property type="molecule type" value="Genomic_DNA"/>
</dbReference>
<dbReference type="RefSeq" id="WP_003723884.1">
    <property type="nucleotide sequence ID" value="NC_002973.6"/>
</dbReference>
<dbReference type="SMR" id="Q720F5"/>
<dbReference type="KEGG" id="lmf:LMOf2365_1284"/>
<dbReference type="HOGENOM" id="CLU_033058_3_2_9"/>
<dbReference type="GO" id="GO:0005737">
    <property type="term" value="C:cytoplasm"/>
    <property type="evidence" value="ECO:0007669"/>
    <property type="project" value="UniProtKB-SubCell"/>
</dbReference>
<dbReference type="GO" id="GO:0003755">
    <property type="term" value="F:peptidyl-prolyl cis-trans isomerase activity"/>
    <property type="evidence" value="ECO:0007669"/>
    <property type="project" value="UniProtKB-UniRule"/>
</dbReference>
<dbReference type="GO" id="GO:0044183">
    <property type="term" value="F:protein folding chaperone"/>
    <property type="evidence" value="ECO:0007669"/>
    <property type="project" value="TreeGrafter"/>
</dbReference>
<dbReference type="GO" id="GO:0043022">
    <property type="term" value="F:ribosome binding"/>
    <property type="evidence" value="ECO:0007669"/>
    <property type="project" value="TreeGrafter"/>
</dbReference>
<dbReference type="GO" id="GO:0051083">
    <property type="term" value="P:'de novo' cotranslational protein folding"/>
    <property type="evidence" value="ECO:0007669"/>
    <property type="project" value="TreeGrafter"/>
</dbReference>
<dbReference type="GO" id="GO:0051301">
    <property type="term" value="P:cell division"/>
    <property type="evidence" value="ECO:0007669"/>
    <property type="project" value="UniProtKB-KW"/>
</dbReference>
<dbReference type="GO" id="GO:0061077">
    <property type="term" value="P:chaperone-mediated protein folding"/>
    <property type="evidence" value="ECO:0007669"/>
    <property type="project" value="TreeGrafter"/>
</dbReference>
<dbReference type="GO" id="GO:0015031">
    <property type="term" value="P:protein transport"/>
    <property type="evidence" value="ECO:0007669"/>
    <property type="project" value="UniProtKB-UniRule"/>
</dbReference>
<dbReference type="GO" id="GO:0043335">
    <property type="term" value="P:protein unfolding"/>
    <property type="evidence" value="ECO:0007669"/>
    <property type="project" value="TreeGrafter"/>
</dbReference>
<dbReference type="FunFam" id="3.10.50.40:FF:000001">
    <property type="entry name" value="Trigger factor"/>
    <property type="match status" value="1"/>
</dbReference>
<dbReference type="FunFam" id="3.30.70.1050:FF:000002">
    <property type="entry name" value="Trigger factor"/>
    <property type="match status" value="1"/>
</dbReference>
<dbReference type="Gene3D" id="3.10.50.40">
    <property type="match status" value="1"/>
</dbReference>
<dbReference type="Gene3D" id="3.30.70.1050">
    <property type="entry name" value="Trigger factor ribosome-binding domain"/>
    <property type="match status" value="1"/>
</dbReference>
<dbReference type="Gene3D" id="1.10.3120.10">
    <property type="entry name" value="Trigger factor, C-terminal domain"/>
    <property type="match status" value="1"/>
</dbReference>
<dbReference type="HAMAP" id="MF_00303">
    <property type="entry name" value="Trigger_factor_Tig"/>
    <property type="match status" value="1"/>
</dbReference>
<dbReference type="InterPro" id="IPR046357">
    <property type="entry name" value="PPIase_dom_sf"/>
</dbReference>
<dbReference type="InterPro" id="IPR001179">
    <property type="entry name" value="PPIase_FKBP_dom"/>
</dbReference>
<dbReference type="InterPro" id="IPR005215">
    <property type="entry name" value="Trig_fac"/>
</dbReference>
<dbReference type="InterPro" id="IPR008880">
    <property type="entry name" value="Trigger_fac_C"/>
</dbReference>
<dbReference type="InterPro" id="IPR037041">
    <property type="entry name" value="Trigger_fac_C_sf"/>
</dbReference>
<dbReference type="InterPro" id="IPR008881">
    <property type="entry name" value="Trigger_fac_ribosome-bd_bac"/>
</dbReference>
<dbReference type="InterPro" id="IPR036611">
    <property type="entry name" value="Trigger_fac_ribosome-bd_sf"/>
</dbReference>
<dbReference type="InterPro" id="IPR027304">
    <property type="entry name" value="Trigger_fact/SurA_dom_sf"/>
</dbReference>
<dbReference type="NCBIfam" id="TIGR00115">
    <property type="entry name" value="tig"/>
    <property type="match status" value="1"/>
</dbReference>
<dbReference type="PANTHER" id="PTHR30560">
    <property type="entry name" value="TRIGGER FACTOR CHAPERONE AND PEPTIDYL-PROLYL CIS/TRANS ISOMERASE"/>
    <property type="match status" value="1"/>
</dbReference>
<dbReference type="PANTHER" id="PTHR30560:SF3">
    <property type="entry name" value="TRIGGER FACTOR-LIKE PROTEIN TIG, CHLOROPLASTIC"/>
    <property type="match status" value="1"/>
</dbReference>
<dbReference type="Pfam" id="PF00254">
    <property type="entry name" value="FKBP_C"/>
    <property type="match status" value="1"/>
</dbReference>
<dbReference type="Pfam" id="PF05698">
    <property type="entry name" value="Trigger_C"/>
    <property type="match status" value="1"/>
</dbReference>
<dbReference type="Pfam" id="PF05697">
    <property type="entry name" value="Trigger_N"/>
    <property type="match status" value="1"/>
</dbReference>
<dbReference type="PIRSF" id="PIRSF003095">
    <property type="entry name" value="Trigger_factor"/>
    <property type="match status" value="1"/>
</dbReference>
<dbReference type="SUPFAM" id="SSF54534">
    <property type="entry name" value="FKBP-like"/>
    <property type="match status" value="1"/>
</dbReference>
<dbReference type="SUPFAM" id="SSF109998">
    <property type="entry name" value="Triger factor/SurA peptide-binding domain-like"/>
    <property type="match status" value="1"/>
</dbReference>
<dbReference type="SUPFAM" id="SSF102735">
    <property type="entry name" value="Trigger factor ribosome-binding domain"/>
    <property type="match status" value="1"/>
</dbReference>
<dbReference type="PROSITE" id="PS50059">
    <property type="entry name" value="FKBP_PPIASE"/>
    <property type="match status" value="1"/>
</dbReference>
<sequence length="427" mass="47854">MSVKWEKQEGNVGKLTFEIEQEKVKEGLDRAFVKVRKTLNVPGFRKGKVPRQIFNQRFGEEALFQDALDILLPEVYSAAIDEAGIDPVDTPQVNIESMEKGETWVLTAEVTVKPEVKLGDYKGLEVEKRETELTTEELEAELKQLQERQAELVVKEDAPAENGDTVILDFEGFKDGVAFEGGQAENHSLELGSGQFIPGFEEKLVGLKAGDEADIELTFPEEYHAEDLAGQPVVFKVKLHEIKTKEVPALDDELAKDIDEEVETLDELKEKISKRLQEAKEESVAQAKQEEVIAKAVENAEVDIPHAMVHHEADHLMNHFAQDLQAQGLTPELYYQFTGQTEEAMHAQMEKDAEKRVKMNLVLEAIAEAENIEPTEEAIDEEISTLAEKYGMEKDAVRAALGDMSELKSDLKIRKAIDVLLDSAVEK</sequence>
<keyword id="KW-0131">Cell cycle</keyword>
<keyword id="KW-0132">Cell division</keyword>
<keyword id="KW-0143">Chaperone</keyword>
<keyword id="KW-0963">Cytoplasm</keyword>
<keyword id="KW-0413">Isomerase</keyword>
<keyword id="KW-0697">Rotamase</keyword>
<feature type="chain" id="PRO_0000179376" description="Trigger factor">
    <location>
        <begin position="1"/>
        <end position="427"/>
    </location>
</feature>
<feature type="domain" description="PPIase FKBP-type" evidence="1">
    <location>
        <begin position="163"/>
        <end position="248"/>
    </location>
</feature>
<accession>Q720F5</accession>
<proteinExistence type="inferred from homology"/>
<gene>
    <name evidence="1" type="primary">tig</name>
    <name type="ordered locus">LMOf2365_1284</name>
</gene>
<protein>
    <recommendedName>
        <fullName evidence="1">Trigger factor</fullName>
        <shortName evidence="1">TF</shortName>
        <ecNumber evidence="1">5.2.1.8</ecNumber>
    </recommendedName>
    <alternativeName>
        <fullName evidence="1">PPIase</fullName>
    </alternativeName>
</protein>
<evidence type="ECO:0000255" key="1">
    <source>
        <dbReference type="HAMAP-Rule" id="MF_00303"/>
    </source>
</evidence>
<comment type="function">
    <text evidence="1">Involved in protein export. Acts as a chaperone by maintaining the newly synthesized protein in an open conformation. Functions as a peptidyl-prolyl cis-trans isomerase.</text>
</comment>
<comment type="catalytic activity">
    <reaction evidence="1">
        <text>[protein]-peptidylproline (omega=180) = [protein]-peptidylproline (omega=0)</text>
        <dbReference type="Rhea" id="RHEA:16237"/>
        <dbReference type="Rhea" id="RHEA-COMP:10747"/>
        <dbReference type="Rhea" id="RHEA-COMP:10748"/>
        <dbReference type="ChEBI" id="CHEBI:83833"/>
        <dbReference type="ChEBI" id="CHEBI:83834"/>
        <dbReference type="EC" id="5.2.1.8"/>
    </reaction>
</comment>
<comment type="subcellular location">
    <subcellularLocation>
        <location>Cytoplasm</location>
    </subcellularLocation>
    <text evidence="1">About half TF is bound to the ribosome near the polypeptide exit tunnel while the other half is free in the cytoplasm.</text>
</comment>
<comment type="domain">
    <text evidence="1">Consists of 3 domains; the N-terminus binds the ribosome, the middle domain has PPIase activity, while the C-terminus has intrinsic chaperone activity on its own.</text>
</comment>
<comment type="similarity">
    <text evidence="1">Belongs to the FKBP-type PPIase family. Tig subfamily.</text>
</comment>
<reference key="1">
    <citation type="journal article" date="2004" name="Nucleic Acids Res.">
        <title>Whole genome comparisons of serotype 4b and 1/2a strains of the food-borne pathogen Listeria monocytogenes reveal new insights into the core genome components of this species.</title>
        <authorList>
            <person name="Nelson K.E."/>
            <person name="Fouts D.E."/>
            <person name="Mongodin E.F."/>
            <person name="Ravel J."/>
            <person name="DeBoy R.T."/>
            <person name="Kolonay J.F."/>
            <person name="Rasko D.A."/>
            <person name="Angiuoli S.V."/>
            <person name="Gill S.R."/>
            <person name="Paulsen I.T."/>
            <person name="Peterson J.D."/>
            <person name="White O."/>
            <person name="Nelson W.C."/>
            <person name="Nierman W.C."/>
            <person name="Beanan M.J."/>
            <person name="Brinkac L.M."/>
            <person name="Daugherty S.C."/>
            <person name="Dodson R.J."/>
            <person name="Durkin A.S."/>
            <person name="Madupu R."/>
            <person name="Haft D.H."/>
            <person name="Selengut J."/>
            <person name="Van Aken S.E."/>
            <person name="Khouri H.M."/>
            <person name="Fedorova N."/>
            <person name="Forberger H.A."/>
            <person name="Tran B."/>
            <person name="Kathariou S."/>
            <person name="Wonderling L.D."/>
            <person name="Uhlich G.A."/>
            <person name="Bayles D.O."/>
            <person name="Luchansky J.B."/>
            <person name="Fraser C.M."/>
        </authorList>
    </citation>
    <scope>NUCLEOTIDE SEQUENCE [LARGE SCALE GENOMIC DNA]</scope>
    <source>
        <strain>F2365</strain>
    </source>
</reference>